<keyword id="KW-0007">Acetylation</keyword>
<keyword id="KW-0106">Calcium</keyword>
<keyword id="KW-1003">Cell membrane</keyword>
<keyword id="KW-0963">Cytoplasm</keyword>
<keyword id="KW-0472">Membrane</keyword>
<keyword id="KW-0479">Metal-binding</keyword>
<keyword id="KW-0539">Nucleus</keyword>
<keyword id="KW-1185">Reference proteome</keyword>
<keyword id="KW-0677">Repeat</keyword>
<organism>
    <name type="scientific">Equus caballus</name>
    <name type="common">Horse</name>
    <dbReference type="NCBI Taxonomy" id="9796"/>
    <lineage>
        <taxon>Eukaryota</taxon>
        <taxon>Metazoa</taxon>
        <taxon>Chordata</taxon>
        <taxon>Craniata</taxon>
        <taxon>Vertebrata</taxon>
        <taxon>Euteleostomi</taxon>
        <taxon>Mammalia</taxon>
        <taxon>Eutheria</taxon>
        <taxon>Laurasiatheria</taxon>
        <taxon>Perissodactyla</taxon>
        <taxon>Equidae</taxon>
        <taxon>Equus</taxon>
    </lineage>
</organism>
<protein>
    <recommendedName>
        <fullName>Protein S100-A6</fullName>
    </recommendedName>
    <alternativeName>
        <fullName>Calcyclin</fullName>
    </alternativeName>
    <alternativeName>
        <fullName>S100 calcium-binding protein A6</fullName>
    </alternativeName>
</protein>
<reference key="1">
    <citation type="journal article" date="1999" name="Mol. Reprod. Dev.">
        <title>Identification and initial characterization of calcyclin and phospholipase A2 in equine conceptuses.</title>
        <authorList>
            <person name="Simpson K.S."/>
            <person name="Adams M.H."/>
            <person name="Behrendt-Adam C.Y."/>
            <person name="Baker C.B."/>
            <person name="McDowell K.J."/>
        </authorList>
    </citation>
    <scope>NUCLEOTIDE SEQUENCE [MRNA]</scope>
</reference>
<accession>O77691</accession>
<sequence>MACPLDQAISLLVAIFHKYSSREGDKNTLSKGELKELIQKELTIGAELEDSEIAKLLDDLDQNKDQVVNFQEYVTFLGALAMIYNEVLKACS</sequence>
<proteinExistence type="inferred from homology"/>
<comment type="function">
    <text evidence="1">May function as calcium sensor and modulator, contributing to cellular calcium signaling. May function by interacting with other proteins, such as TPR-containing proteins, and indirectly play a role in many physiological processes such as the reorganization of the actin cytoskeleton and in cell motility. Binds 2 calcium ions. Calcium binding is cooperative (By similarity).</text>
</comment>
<comment type="subunit">
    <text evidence="1">Homodimer; head to tail assembly of 2 subunits. Interacts with CACYBP in a calcium-dependent manner. Interacts with ANXA2 and ANXA11 (via N-terminus). Interacts with SUGT1. Interacts with TP53; has higher affinity for TP53 that is phosphorylated on its N-terminal domain, and lower affinity for TP53 that is phosphorylated on its C-terminal domain. Interacts with tropomyosin. Interacts with FKBP4. Interacts with PPP5C (via TPR repeats); the interaction is calcium-dependent and modulates PPP5C activity. Interacts with TPPP; this interaction inhibits TPPP dimerization (By similarity).</text>
</comment>
<comment type="subcellular location">
    <subcellularLocation>
        <location evidence="1">Nucleus envelope</location>
    </subcellularLocation>
    <subcellularLocation>
        <location evidence="1">Cytoplasm</location>
    </subcellularLocation>
    <subcellularLocation>
        <location evidence="1">Cell membrane</location>
        <topology evidence="1">Peripheral membrane protein</topology>
        <orientation evidence="1">Cytoplasmic side</orientation>
    </subcellularLocation>
</comment>
<comment type="similarity">
    <text evidence="4">Belongs to the S-100 family.</text>
</comment>
<dbReference type="EMBL" id="AF083065">
    <property type="protein sequence ID" value="AAC33290.1"/>
    <property type="molecule type" value="mRNA"/>
</dbReference>
<dbReference type="RefSeq" id="NP_001075310.1">
    <property type="nucleotide sequence ID" value="NM_001081841.1"/>
</dbReference>
<dbReference type="SMR" id="O77691"/>
<dbReference type="STRING" id="9796.ENSECAP00000006408"/>
<dbReference type="PaxDb" id="9796-ENSECAP00000006408"/>
<dbReference type="PeptideAtlas" id="O77691"/>
<dbReference type="GeneID" id="100033887"/>
<dbReference type="KEGG" id="ecb:100033887"/>
<dbReference type="CTD" id="6277"/>
<dbReference type="HOGENOM" id="CLU_138624_2_0_1"/>
<dbReference type="InParanoid" id="O77691"/>
<dbReference type="OMA" id="LVVICHK"/>
<dbReference type="OrthoDB" id="8881129at2759"/>
<dbReference type="TreeFam" id="TF332727"/>
<dbReference type="Proteomes" id="UP000002281">
    <property type="component" value="Chromosome 5"/>
</dbReference>
<dbReference type="Bgee" id="ENSECAG00000008401">
    <property type="expression patterns" value="Expressed in chorionic villus and 23 other cell types or tissues"/>
</dbReference>
<dbReference type="GO" id="GO:0009898">
    <property type="term" value="C:cytoplasmic side of plasma membrane"/>
    <property type="evidence" value="ECO:0000250"/>
    <property type="project" value="UniProtKB"/>
</dbReference>
<dbReference type="GO" id="GO:0005829">
    <property type="term" value="C:cytosol"/>
    <property type="evidence" value="ECO:0000250"/>
    <property type="project" value="UniProtKB"/>
</dbReference>
<dbReference type="GO" id="GO:0005635">
    <property type="term" value="C:nuclear envelope"/>
    <property type="evidence" value="ECO:0007669"/>
    <property type="project" value="UniProtKB-SubCell"/>
</dbReference>
<dbReference type="GO" id="GO:0005634">
    <property type="term" value="C:nucleus"/>
    <property type="evidence" value="ECO:0000318"/>
    <property type="project" value="GO_Central"/>
</dbReference>
<dbReference type="GO" id="GO:0048471">
    <property type="term" value="C:perinuclear region of cytoplasm"/>
    <property type="evidence" value="ECO:0000318"/>
    <property type="project" value="GO_Central"/>
</dbReference>
<dbReference type="GO" id="GO:0005509">
    <property type="term" value="F:calcium ion binding"/>
    <property type="evidence" value="ECO:0000250"/>
    <property type="project" value="UniProtKB"/>
</dbReference>
<dbReference type="GO" id="GO:0048306">
    <property type="term" value="F:calcium-dependent protein binding"/>
    <property type="evidence" value="ECO:0000318"/>
    <property type="project" value="GO_Central"/>
</dbReference>
<dbReference type="GO" id="GO:0044548">
    <property type="term" value="F:S100 protein binding"/>
    <property type="evidence" value="ECO:0000318"/>
    <property type="project" value="GO_Central"/>
</dbReference>
<dbReference type="CDD" id="cd05029">
    <property type="entry name" value="S-100A6"/>
    <property type="match status" value="1"/>
</dbReference>
<dbReference type="FunFam" id="1.10.238.10:FF:000044">
    <property type="entry name" value="Protein S100"/>
    <property type="match status" value="1"/>
</dbReference>
<dbReference type="Gene3D" id="1.10.238.10">
    <property type="entry name" value="EF-hand"/>
    <property type="match status" value="1"/>
</dbReference>
<dbReference type="InterPro" id="IPR011992">
    <property type="entry name" value="EF-hand-dom_pair"/>
</dbReference>
<dbReference type="InterPro" id="IPR018247">
    <property type="entry name" value="EF_Hand_1_Ca_BS"/>
</dbReference>
<dbReference type="InterPro" id="IPR002048">
    <property type="entry name" value="EF_hand_dom"/>
</dbReference>
<dbReference type="InterPro" id="IPR034118">
    <property type="entry name" value="S-100A6"/>
</dbReference>
<dbReference type="InterPro" id="IPR001751">
    <property type="entry name" value="S100/CaBP7/8-like_CS"/>
</dbReference>
<dbReference type="InterPro" id="IPR013787">
    <property type="entry name" value="S100_Ca-bd_sub"/>
</dbReference>
<dbReference type="PANTHER" id="PTHR11639:SF80">
    <property type="entry name" value="PROTEIN S100-A6"/>
    <property type="match status" value="1"/>
</dbReference>
<dbReference type="PANTHER" id="PTHR11639">
    <property type="entry name" value="S100 CALCIUM-BINDING PROTEIN"/>
    <property type="match status" value="1"/>
</dbReference>
<dbReference type="Pfam" id="PF01023">
    <property type="entry name" value="S_100"/>
    <property type="match status" value="1"/>
</dbReference>
<dbReference type="SMART" id="SM00054">
    <property type="entry name" value="EFh"/>
    <property type="match status" value="1"/>
</dbReference>
<dbReference type="SMART" id="SM01394">
    <property type="entry name" value="S_100"/>
    <property type="match status" value="1"/>
</dbReference>
<dbReference type="SUPFAM" id="SSF47473">
    <property type="entry name" value="EF-hand"/>
    <property type="match status" value="1"/>
</dbReference>
<dbReference type="PROSITE" id="PS00018">
    <property type="entry name" value="EF_HAND_1"/>
    <property type="match status" value="1"/>
</dbReference>
<dbReference type="PROSITE" id="PS50222">
    <property type="entry name" value="EF_HAND_2"/>
    <property type="match status" value="1"/>
</dbReference>
<dbReference type="PROSITE" id="PS00303">
    <property type="entry name" value="S100_CABP"/>
    <property type="match status" value="1"/>
</dbReference>
<feature type="chain" id="PRO_0000143983" description="Protein S100-A6">
    <location>
        <begin position="1"/>
        <end position="92"/>
    </location>
</feature>
<feature type="domain" description="EF-hand 1" evidence="4">
    <location>
        <begin position="12"/>
        <end position="47"/>
    </location>
</feature>
<feature type="domain" description="EF-hand 2" evidence="3">
    <location>
        <begin position="48"/>
        <end position="83"/>
    </location>
</feature>
<feature type="binding site" evidence="4">
    <location>
        <position position="28"/>
    </location>
    <ligand>
        <name>Ca(2+)</name>
        <dbReference type="ChEBI" id="CHEBI:29108"/>
        <label>1</label>
    </ligand>
</feature>
<feature type="binding site" evidence="4">
    <location>
        <position position="33"/>
    </location>
    <ligand>
        <name>Ca(2+)</name>
        <dbReference type="ChEBI" id="CHEBI:29108"/>
        <label>1</label>
    </ligand>
</feature>
<feature type="binding site" evidence="3">
    <location>
        <position position="61"/>
    </location>
    <ligand>
        <name>Ca(2+)</name>
        <dbReference type="ChEBI" id="CHEBI:29108"/>
        <label>2</label>
    </ligand>
</feature>
<feature type="binding site" evidence="3">
    <location>
        <position position="63"/>
    </location>
    <ligand>
        <name>Ca(2+)</name>
        <dbReference type="ChEBI" id="CHEBI:29108"/>
        <label>2</label>
    </ligand>
</feature>
<feature type="binding site" evidence="3">
    <location>
        <position position="65"/>
    </location>
    <ligand>
        <name>Ca(2+)</name>
        <dbReference type="ChEBI" id="CHEBI:29108"/>
        <label>2</label>
    </ligand>
</feature>
<feature type="binding site" evidence="3">
    <location>
        <position position="72"/>
    </location>
    <ligand>
        <name>Ca(2+)</name>
        <dbReference type="ChEBI" id="CHEBI:29108"/>
        <label>2</label>
    </ligand>
</feature>
<feature type="modified residue" description="N6-acetyllysine" evidence="2">
    <location>
        <position position="40"/>
    </location>
</feature>
<evidence type="ECO:0000250" key="1"/>
<evidence type="ECO:0000250" key="2">
    <source>
        <dbReference type="UniProtKB" id="P06703"/>
    </source>
</evidence>
<evidence type="ECO:0000255" key="3">
    <source>
        <dbReference type="PROSITE-ProRule" id="PRU00448"/>
    </source>
</evidence>
<evidence type="ECO:0000305" key="4"/>
<gene>
    <name type="primary">S100A6</name>
    <name type="synonym">CACY</name>
</gene>
<name>S10A6_HORSE</name>